<reference key="1">
    <citation type="journal article" date="2001" name="Proc. Natl. Acad. Sci. U.S.A.">
        <title>Complete genomic sequence of Pasteurella multocida Pm70.</title>
        <authorList>
            <person name="May B.J."/>
            <person name="Zhang Q."/>
            <person name="Li L.L."/>
            <person name="Paustian M.L."/>
            <person name="Whittam T.S."/>
            <person name="Kapur V."/>
        </authorList>
    </citation>
    <scope>NUCLEOTIDE SEQUENCE [LARGE SCALE GENOMIC DNA]</scope>
    <source>
        <strain>Pm70</strain>
    </source>
</reference>
<evidence type="ECO:0000255" key="1">
    <source>
        <dbReference type="HAMAP-Rule" id="MF_00505"/>
    </source>
</evidence>
<name>HTPG_PASMU</name>
<dbReference type="EMBL" id="AE004439">
    <property type="protein sequence ID" value="AAK03108.1"/>
    <property type="molecule type" value="Genomic_DNA"/>
</dbReference>
<dbReference type="RefSeq" id="WP_010906976.1">
    <property type="nucleotide sequence ID" value="NC_002663.1"/>
</dbReference>
<dbReference type="SMR" id="Q9CM20"/>
<dbReference type="STRING" id="272843.PM1024"/>
<dbReference type="EnsemblBacteria" id="AAK03108">
    <property type="protein sequence ID" value="AAK03108"/>
    <property type="gene ID" value="PM1024"/>
</dbReference>
<dbReference type="KEGG" id="pmu:PM1024"/>
<dbReference type="PATRIC" id="fig|272843.6.peg.1037"/>
<dbReference type="HOGENOM" id="CLU_006684_3_0_6"/>
<dbReference type="OrthoDB" id="9802640at2"/>
<dbReference type="Proteomes" id="UP000000809">
    <property type="component" value="Chromosome"/>
</dbReference>
<dbReference type="GO" id="GO:0005737">
    <property type="term" value="C:cytoplasm"/>
    <property type="evidence" value="ECO:0007669"/>
    <property type="project" value="UniProtKB-SubCell"/>
</dbReference>
<dbReference type="GO" id="GO:0005524">
    <property type="term" value="F:ATP binding"/>
    <property type="evidence" value="ECO:0007669"/>
    <property type="project" value="UniProtKB-UniRule"/>
</dbReference>
<dbReference type="GO" id="GO:0016887">
    <property type="term" value="F:ATP hydrolysis activity"/>
    <property type="evidence" value="ECO:0007669"/>
    <property type="project" value="InterPro"/>
</dbReference>
<dbReference type="GO" id="GO:0140662">
    <property type="term" value="F:ATP-dependent protein folding chaperone"/>
    <property type="evidence" value="ECO:0007669"/>
    <property type="project" value="InterPro"/>
</dbReference>
<dbReference type="GO" id="GO:0051082">
    <property type="term" value="F:unfolded protein binding"/>
    <property type="evidence" value="ECO:0007669"/>
    <property type="project" value="UniProtKB-UniRule"/>
</dbReference>
<dbReference type="CDD" id="cd16927">
    <property type="entry name" value="HATPase_Hsp90-like"/>
    <property type="match status" value="1"/>
</dbReference>
<dbReference type="FunFam" id="1.20.120.790:FF:000002">
    <property type="entry name" value="Molecular chaperone HtpG"/>
    <property type="match status" value="1"/>
</dbReference>
<dbReference type="FunFam" id="3.30.230.80:FF:000002">
    <property type="entry name" value="Molecular chaperone HtpG"/>
    <property type="match status" value="1"/>
</dbReference>
<dbReference type="FunFam" id="3.30.565.10:FF:000009">
    <property type="entry name" value="Molecular chaperone HtpG"/>
    <property type="match status" value="1"/>
</dbReference>
<dbReference type="FunFam" id="3.40.50.11260:FF:000002">
    <property type="entry name" value="Molecular chaperone HtpG"/>
    <property type="match status" value="1"/>
</dbReference>
<dbReference type="Gene3D" id="3.30.230.80">
    <property type="match status" value="1"/>
</dbReference>
<dbReference type="Gene3D" id="3.40.50.11260">
    <property type="match status" value="1"/>
</dbReference>
<dbReference type="Gene3D" id="1.20.120.790">
    <property type="entry name" value="Heat shock protein 90, C-terminal domain"/>
    <property type="match status" value="1"/>
</dbReference>
<dbReference type="Gene3D" id="3.30.565.10">
    <property type="entry name" value="Histidine kinase-like ATPase, C-terminal domain"/>
    <property type="match status" value="1"/>
</dbReference>
<dbReference type="HAMAP" id="MF_00505">
    <property type="entry name" value="HSP90"/>
    <property type="match status" value="1"/>
</dbReference>
<dbReference type="InterPro" id="IPR036890">
    <property type="entry name" value="HATPase_C_sf"/>
</dbReference>
<dbReference type="InterPro" id="IPR019805">
    <property type="entry name" value="Heat_shock_protein_90_CS"/>
</dbReference>
<dbReference type="InterPro" id="IPR037196">
    <property type="entry name" value="HSP90_C"/>
</dbReference>
<dbReference type="InterPro" id="IPR001404">
    <property type="entry name" value="Hsp90_fam"/>
</dbReference>
<dbReference type="InterPro" id="IPR020575">
    <property type="entry name" value="Hsp90_N"/>
</dbReference>
<dbReference type="InterPro" id="IPR020568">
    <property type="entry name" value="Ribosomal_Su5_D2-typ_SF"/>
</dbReference>
<dbReference type="NCBIfam" id="NF003555">
    <property type="entry name" value="PRK05218.1"/>
    <property type="match status" value="1"/>
</dbReference>
<dbReference type="PANTHER" id="PTHR11528">
    <property type="entry name" value="HEAT SHOCK PROTEIN 90 FAMILY MEMBER"/>
    <property type="match status" value="1"/>
</dbReference>
<dbReference type="Pfam" id="PF13589">
    <property type="entry name" value="HATPase_c_3"/>
    <property type="match status" value="1"/>
</dbReference>
<dbReference type="Pfam" id="PF00183">
    <property type="entry name" value="HSP90"/>
    <property type="match status" value="1"/>
</dbReference>
<dbReference type="PIRSF" id="PIRSF002583">
    <property type="entry name" value="Hsp90"/>
    <property type="match status" value="1"/>
</dbReference>
<dbReference type="PRINTS" id="PR00775">
    <property type="entry name" value="HEATSHOCK90"/>
</dbReference>
<dbReference type="SMART" id="SM00387">
    <property type="entry name" value="HATPase_c"/>
    <property type="match status" value="1"/>
</dbReference>
<dbReference type="SUPFAM" id="SSF55874">
    <property type="entry name" value="ATPase domain of HSP90 chaperone/DNA topoisomerase II/histidine kinase"/>
    <property type="match status" value="1"/>
</dbReference>
<dbReference type="SUPFAM" id="SSF110942">
    <property type="entry name" value="HSP90 C-terminal domain"/>
    <property type="match status" value="1"/>
</dbReference>
<dbReference type="SUPFAM" id="SSF54211">
    <property type="entry name" value="Ribosomal protein S5 domain 2-like"/>
    <property type="match status" value="1"/>
</dbReference>
<dbReference type="PROSITE" id="PS00298">
    <property type="entry name" value="HSP90"/>
    <property type="match status" value="1"/>
</dbReference>
<gene>
    <name evidence="1" type="primary">htpG</name>
    <name type="ordered locus">PM1024</name>
</gene>
<accession>Q9CM20</accession>
<proteinExistence type="inferred from homology"/>
<protein>
    <recommendedName>
        <fullName evidence="1">Chaperone protein HtpG</fullName>
    </recommendedName>
    <alternativeName>
        <fullName evidence="1">Heat shock protein HtpG</fullName>
    </alternativeName>
    <alternativeName>
        <fullName evidence="1">High temperature protein G</fullName>
    </alternativeName>
</protein>
<organism>
    <name type="scientific">Pasteurella multocida (strain Pm70)</name>
    <dbReference type="NCBI Taxonomy" id="272843"/>
    <lineage>
        <taxon>Bacteria</taxon>
        <taxon>Pseudomonadati</taxon>
        <taxon>Pseudomonadota</taxon>
        <taxon>Gammaproteobacteria</taxon>
        <taxon>Pasteurellales</taxon>
        <taxon>Pasteurellaceae</taxon>
        <taxon>Pasteurella</taxon>
    </lineage>
</organism>
<feature type="chain" id="PRO_0000063000" description="Chaperone protein HtpG">
    <location>
        <begin position="1"/>
        <end position="631"/>
    </location>
</feature>
<feature type="region of interest" description="A; substrate-binding" evidence="1">
    <location>
        <begin position="1"/>
        <end position="339"/>
    </location>
</feature>
<feature type="region of interest" description="B" evidence="1">
    <location>
        <begin position="340"/>
        <end position="555"/>
    </location>
</feature>
<feature type="region of interest" description="C" evidence="1">
    <location>
        <begin position="556"/>
        <end position="631"/>
    </location>
</feature>
<keyword id="KW-0067">ATP-binding</keyword>
<keyword id="KW-0143">Chaperone</keyword>
<keyword id="KW-0963">Cytoplasm</keyword>
<keyword id="KW-0547">Nucleotide-binding</keyword>
<keyword id="KW-1185">Reference proteome</keyword>
<keyword id="KW-0346">Stress response</keyword>
<sequence length="631" mass="71852">MSTNQETRGFQSEVKQLLQLMIHSLYSNKEIFLRELISNASDAADKLRFKALSVPELYEGDGDLKVRIRFDEEKGTLTISDNGIGMTRDEVIDHLGTIAKSGTKEFLSALGQDQAKDSQLIGQFGVGFYSAFIVADKVTVKTRAAGVSADKAVLWESAGEGEYSVADIDKKERGTEITLHLREDEKAFLNDWRLREIIGKYSDHIGLPVEILAKEYDDEGKETGIKWEKINKAQALWTRAKNEISEEEYQEFYKHLSHDFTDPLLWAHNKVEGNQEYTSLLYVPAKAPWDLFNREHKHGLKLYVQRVFIMDDAQVFMPNYLRFMRGLLDSNDLPLNVSREILQDNKVTSALRKALTKRALQMLEKLAKDDAEKYQRFWQEFGLVLKEGPAEDFANKETIAKLLRFASTHNDSSQQSVSLEDYVARMKEGQKAIYYITADTYVAAKNSPHLELFNKKGIEVLLLSDRIDEWMLSYLTEFDGKPLQTISKADLDLGDLADKEEDSQKAQDEQYASFVERVKTLLGERVKEVRLTHRLTDTPAVVSTGDDQMTTQMAKLFAAAGQAMPEVKYTFELNPEHGLVQKVAEIADEQQFADWIELLLEQAMLAERGSLENPVAFIKRMNTLLSKLTSH</sequence>
<comment type="function">
    <text evidence="1">Molecular chaperone. Has ATPase activity.</text>
</comment>
<comment type="subunit">
    <text evidence="1">Homodimer.</text>
</comment>
<comment type="subcellular location">
    <subcellularLocation>
        <location evidence="1">Cytoplasm</location>
    </subcellularLocation>
</comment>
<comment type="similarity">
    <text evidence="1">Belongs to the heat shock protein 90 family.</text>
</comment>